<feature type="transit peptide" description="Mitochondrion" evidence="1">
    <location>
        <begin position="1"/>
        <end status="unknown"/>
    </location>
</feature>
<feature type="chain" id="PRO_0000030291" description="Thioredoxin reductase 1, mitochondrial">
    <location>
        <begin status="unknown"/>
        <end position="596"/>
    </location>
</feature>
<feature type="region of interest" description="Disordered" evidence="2">
    <location>
        <begin position="59"/>
        <end position="87"/>
    </location>
</feature>
<feature type="compositionally biased region" description="Low complexity" evidence="2">
    <location>
        <begin position="68"/>
        <end position="79"/>
    </location>
</feature>
<feature type="active site" description="Proton acceptor" evidence="8">
    <location>
        <position position="569"/>
    </location>
</feature>
<feature type="binding site" evidence="8">
    <location>
        <begin position="120"/>
        <end position="126"/>
    </location>
    <ligand>
        <name>FAD</name>
        <dbReference type="ChEBI" id="CHEBI:57692"/>
    </ligand>
</feature>
<feature type="binding site" evidence="8">
    <location>
        <begin position="143"/>
        <end position="147"/>
    </location>
    <ligand>
        <name>FAD</name>
        <dbReference type="ChEBI" id="CHEBI:57692"/>
    </ligand>
</feature>
<feature type="binding site" evidence="8">
    <location>
        <begin position="159"/>
        <end position="170"/>
    </location>
    <ligand>
        <name>FAD</name>
        <dbReference type="ChEBI" id="CHEBI:57692"/>
    </ligand>
</feature>
<feature type="binding site" evidence="8">
    <location>
        <begin position="233"/>
        <end position="235"/>
    </location>
    <ligand>
        <name>FAD</name>
        <dbReference type="ChEBI" id="CHEBI:57692"/>
    </ligand>
</feature>
<feature type="binding site" evidence="8">
    <location>
        <begin position="262"/>
        <end position="266"/>
    </location>
    <ligand>
        <name>FAD</name>
        <dbReference type="ChEBI" id="CHEBI:57692"/>
    </ligand>
</feature>
<feature type="binding site" evidence="8">
    <location>
        <position position="282"/>
    </location>
    <ligand>
        <name>FAD</name>
        <dbReference type="ChEBI" id="CHEBI:57692"/>
    </ligand>
</feature>
<feature type="binding site" evidence="8">
    <location>
        <position position="286"/>
    </location>
    <ligand>
        <name>FAD</name>
        <dbReference type="ChEBI" id="CHEBI:57692"/>
    </ligand>
</feature>
<feature type="binding site" evidence="8">
    <location>
        <position position="302"/>
    </location>
    <ligand>
        <name>FAD</name>
        <dbReference type="ChEBI" id="CHEBI:57692"/>
    </ligand>
</feature>
<feature type="binding site" evidence="8">
    <location>
        <begin position="322"/>
        <end position="328"/>
    </location>
    <ligand>
        <name>NADP(+)</name>
        <dbReference type="ChEBI" id="CHEBI:58349"/>
    </ligand>
</feature>
<feature type="binding site" evidence="8">
    <location>
        <position position="355"/>
    </location>
    <ligand>
        <name>NADP(+)</name>
        <dbReference type="ChEBI" id="CHEBI:58349"/>
    </ligand>
</feature>
<feature type="binding site" evidence="8">
    <location>
        <begin position="392"/>
        <end position="399"/>
    </location>
    <ligand>
        <name>FAD</name>
        <dbReference type="ChEBI" id="CHEBI:57692"/>
    </ligand>
</feature>
<feature type="binding site" evidence="8">
    <location>
        <begin position="429"/>
        <end position="432"/>
    </location>
    <ligand>
        <name>FAD</name>
        <dbReference type="ChEBI" id="CHEBI:57692"/>
    </ligand>
</feature>
<feature type="binding site" evidence="8">
    <location>
        <begin position="438"/>
        <end position="443"/>
    </location>
    <ligand>
        <name>FAD</name>
        <dbReference type="ChEBI" id="CHEBI:57692"/>
    </ligand>
</feature>
<feature type="binding site" evidence="8">
    <location>
        <position position="472"/>
    </location>
    <ligand>
        <name>FAD</name>
        <dbReference type="ChEBI" id="CHEBI:57692"/>
    </ligand>
</feature>
<feature type="binding site" evidence="8">
    <location>
        <position position="570"/>
    </location>
    <ligand>
        <name>FAD</name>
        <dbReference type="ChEBI" id="CHEBI:57692"/>
    </ligand>
</feature>
<feature type="disulfide bond" description="Redox-active" evidence="8">
    <location>
        <begin position="162"/>
        <end position="167"/>
    </location>
</feature>
<feature type="disulfide bond" description="Redox-active" evidence="8">
    <location>
        <begin position="594"/>
        <end position="595"/>
    </location>
</feature>
<feature type="splice variant" id="VSP_005572" description="In isoform A and isoform D." evidence="11 12 13">
    <location>
        <begin position="1"/>
        <end position="105"/>
    </location>
</feature>
<feature type="splice variant" id="VSP_005571" description="In isoform C." evidence="13">
    <location>
        <begin position="1"/>
        <end position="88"/>
    </location>
</feature>
<feature type="splice variant" id="VSP_005573" description="In isoform C." evidence="13">
    <original>QHPHCDRAAMYAQPVRKMSTKG</original>
    <variation>MLKYMICAIVVGAKKSTSSKYN</variation>
    <location>
        <begin position="89"/>
        <end position="110"/>
    </location>
</feature>
<feature type="splice variant" id="VSP_005574" description="In isoform A." evidence="11 12 13">
    <original>MSTKG</original>
    <variation>MAPVQ</variation>
    <location>
        <begin position="106"/>
        <end position="110"/>
    </location>
</feature>
<feature type="mutagenesis site" description="Almost complete loss of TrX reduction." evidence="9">
    <original>H</original>
    <variation>Q</variation>
    <location>
        <position position="569"/>
    </location>
</feature>
<feature type="mutagenesis site" description="Reduced Trx reduction." evidence="10">
    <original>E</original>
    <variation>A</variation>
    <location>
        <position position="574"/>
    </location>
</feature>
<feature type="mutagenesis site" description="Reduced Trx reduction." evidence="10">
    <original>E</original>
    <variation>Q</variation>
    <location>
        <position position="574"/>
    </location>
</feature>
<feature type="mutagenesis site" description="Loss of Trx reduction." evidence="3">
    <original>C</original>
    <variation>S</variation>
    <location>
        <position position="594"/>
    </location>
</feature>
<feature type="mutagenesis site" description="Loss of Trx reduction." evidence="3">
    <original>C</original>
    <variation>S</variation>
    <location>
        <position position="595"/>
    </location>
</feature>
<feature type="sequence conflict" description="In Ref. 6; AAK93067." evidence="14" ref="6">
    <original>F</original>
    <variation>L</variation>
    <location>
        <position position="88"/>
    </location>
</feature>
<feature type="sequence conflict" description="In Ref. 1; AAB48441." evidence="14" ref="1">
    <original>V</original>
    <variation>S</variation>
    <location>
        <position position="134"/>
    </location>
</feature>
<feature type="sequence conflict" description="In Ref. 1; AAB48441." evidence="14" ref="1">
    <location>
        <position position="151"/>
    </location>
</feature>
<feature type="sequence conflict" description="In Ref. 1; AAB48441." evidence="14" ref="1">
    <location>
        <begin position="189"/>
        <end position="190"/>
    </location>
</feature>
<feature type="sequence conflict" description="In Ref. 1; AAB48441 and 6; AAK93067." evidence="14" ref="1 6">
    <original>E</original>
    <variation>D</variation>
    <location>
        <position position="195"/>
    </location>
</feature>
<feature type="sequence conflict" description="In Ref. 1; AAB48441." evidence="14" ref="1">
    <original>KLVQS</original>
    <variation>RLCAV</variation>
    <location>
        <begin position="203"/>
        <end position="207"/>
    </location>
</feature>
<feature type="sequence conflict" description="In Ref. 1; AAB48441." evidence="14" ref="1">
    <original>KSVN</original>
    <variation>SRH</variation>
    <location>
        <begin position="213"/>
        <end position="216"/>
    </location>
</feature>
<feature type="sequence conflict" description="In Ref. 1; AAB48441." evidence="14" ref="1">
    <original>R</original>
    <variation>V</variation>
    <location>
        <position position="220"/>
    </location>
</feature>
<feature type="sequence conflict" description="In Ref. 1; AAB48441." evidence="14" ref="1">
    <original>DSHTLLAKL</original>
    <variation>TRTHCCPSM</variation>
    <location>
        <begin position="239"/>
        <end position="247"/>
    </location>
</feature>
<feature type="sequence conflict" description="In Ref. 1; AAB48441." evidence="14" ref="1">
    <location>
        <position position="264"/>
    </location>
</feature>
<feature type="sequence conflict" description="In Ref. 1; AAB48441." evidence="14" ref="1">
    <original>VEYGI</original>
    <variation>AEIGT</variation>
    <location>
        <begin position="276"/>
        <end position="280"/>
    </location>
</feature>
<feature type="sequence conflict" description="In Ref. 1; AAB48441." evidence="14" ref="1">
    <location>
        <position position="292"/>
    </location>
</feature>
<feature type="sequence conflict" description="In Ref. 1; AAB48441." evidence="14" ref="1">
    <original>EP</original>
    <variation>G</variation>
    <location>
        <begin position="317"/>
        <end position="318"/>
    </location>
</feature>
<feature type="sequence conflict" description="In Ref. 1; AAB48441." evidence="14" ref="1">
    <original>RKTVPLSVEKQDDGKLLVKYKNVETGEEAEDVYDTV</original>
    <variation>ADVDRCREADDAAAREYRLTQIRFTTSHHR</variation>
    <location>
        <begin position="351"/>
        <end position="386"/>
    </location>
</feature>
<feature type="sequence conflict" description="In Ref. 6; AAK93067." evidence="14" ref="6">
    <original>A</original>
    <variation>S</variation>
    <location>
        <position position="379"/>
    </location>
</feature>
<feature type="sequence conflict" description="In Ref. 1; AAB48441." evidence="14" ref="1">
    <original>VDD</original>
    <variation>CDS</variation>
    <location>
        <begin position="396"/>
        <end position="398"/>
    </location>
</feature>
<feature type="sequence conflict" description="In Ref. 1; AAB48441." evidence="14" ref="1">
    <original>NAGV</original>
    <variation>MPAL</variation>
    <location>
        <begin position="403"/>
        <end position="406"/>
    </location>
</feature>
<feature type="sequence conflict" description="In Ref. 1; AAB48441." evidence="14" ref="1">
    <original>AN</original>
    <variation>PH</variation>
    <location>
        <begin position="424"/>
        <end position="425"/>
    </location>
</feature>
<feature type="sequence conflict" description="In Ref. 1; AAB48441." evidence="14" ref="1">
    <original>Y</original>
    <variation>F</variation>
    <location>
        <position position="455"/>
    </location>
</feature>
<feature type="sequence conflict" description="In Ref. 1; AAB48441." evidence="14" ref="1">
    <original>R</original>
    <variation>S</variation>
    <location>
        <position position="461"/>
    </location>
</feature>
<feature type="sequence conflict" description="In Ref. 1; AAB48441." evidence="14" ref="1">
    <original>TPLEYACVGLS</original>
    <variation>SWSTSASGLA</variation>
    <location>
        <begin position="473"/>
        <end position="483"/>
    </location>
</feature>
<feature type="sequence conflict" description="In Ref. 1; AAB48441." evidence="14" ref="1">
    <original>VKQFGADE</original>
    <variation>SSSSEPR</variation>
    <location>
        <begin position="488"/>
        <end position="495"/>
    </location>
</feature>
<feature type="sequence conflict" description="In Ref. 1; AAB48441." evidence="14" ref="1">
    <original>IN</original>
    <variation>L</variation>
    <location>
        <begin position="559"/>
        <end position="560"/>
    </location>
</feature>
<feature type="sequence conflict" description="In Ref. 1; AAB48441." evidence="14" ref="1">
    <original>K</original>
    <variation>KP</variation>
    <location>
        <position position="583"/>
    </location>
</feature>
<feature type="strand" evidence="19">
    <location>
        <begin position="114"/>
        <end position="120"/>
    </location>
</feature>
<feature type="helix" evidence="19">
    <location>
        <begin position="124"/>
        <end position="135"/>
    </location>
</feature>
<feature type="strand" evidence="19">
    <location>
        <begin position="140"/>
        <end position="143"/>
    </location>
</feature>
<feature type="turn" evidence="19">
    <location>
        <begin position="150"/>
        <end position="152"/>
    </location>
</feature>
<feature type="helix" evidence="19">
    <location>
        <begin position="161"/>
        <end position="165"/>
    </location>
</feature>
<feature type="helix" evidence="19">
    <location>
        <begin position="167"/>
        <end position="188"/>
    </location>
</feature>
<feature type="helix" evidence="19">
    <location>
        <begin position="201"/>
        <end position="225"/>
    </location>
</feature>
<feature type="strand" evidence="19">
    <location>
        <begin position="229"/>
        <end position="231"/>
    </location>
</feature>
<feature type="strand" evidence="19">
    <location>
        <begin position="233"/>
        <end position="239"/>
    </location>
</feature>
<feature type="strand" evidence="19">
    <location>
        <begin position="242"/>
        <end position="246"/>
    </location>
</feature>
<feature type="strand" evidence="19">
    <location>
        <begin position="252"/>
        <end position="261"/>
    </location>
</feature>
<feature type="strand" evidence="19">
    <location>
        <begin position="265"/>
        <end position="267"/>
    </location>
</feature>
<feature type="helix" evidence="19">
    <location>
        <begin position="275"/>
        <end position="278"/>
    </location>
</feature>
<feature type="helix" evidence="19">
    <location>
        <begin position="282"/>
        <end position="285"/>
    </location>
</feature>
<feature type="strand" evidence="19">
    <location>
        <begin position="294"/>
        <end position="298"/>
    </location>
</feature>
<feature type="helix" evidence="19">
    <location>
        <begin position="302"/>
        <end position="313"/>
    </location>
</feature>
<feature type="strand" evidence="19">
    <location>
        <begin position="317"/>
        <end position="324"/>
    </location>
</feature>
<feature type="helix" evidence="19">
    <location>
        <begin position="332"/>
        <end position="344"/>
    </location>
</feature>
<feature type="strand" evidence="19">
    <location>
        <begin position="349"/>
        <end position="351"/>
    </location>
</feature>
<feature type="strand" evidence="19">
    <location>
        <begin position="353"/>
        <end position="360"/>
    </location>
</feature>
<feature type="strand" evidence="19">
    <location>
        <begin position="366"/>
        <end position="372"/>
    </location>
</feature>
<feature type="turn" evidence="19">
    <location>
        <begin position="373"/>
        <end position="375"/>
    </location>
</feature>
<feature type="strand" evidence="19">
    <location>
        <begin position="378"/>
        <end position="388"/>
    </location>
</feature>
<feature type="strand" evidence="19">
    <location>
        <begin position="392"/>
        <end position="394"/>
    </location>
</feature>
<feature type="helix" evidence="19">
    <location>
        <begin position="397"/>
        <end position="399"/>
    </location>
</feature>
<feature type="helix" evidence="19">
    <location>
        <begin position="401"/>
        <end position="403"/>
    </location>
</feature>
<feature type="strand" evidence="18">
    <location>
        <begin position="409"/>
        <end position="413"/>
    </location>
</feature>
<feature type="strand" evidence="19">
    <location>
        <begin position="426"/>
        <end position="428"/>
    </location>
</feature>
<feature type="helix" evidence="20">
    <location>
        <begin position="430"/>
        <end position="432"/>
    </location>
</feature>
<feature type="helix" evidence="19">
    <location>
        <begin position="440"/>
        <end position="455"/>
    </location>
</feature>
<feature type="strand" evidence="19">
    <location>
        <begin position="469"/>
        <end position="471"/>
    </location>
</feature>
<feature type="strand" evidence="19">
    <location>
        <begin position="473"/>
        <end position="481"/>
    </location>
</feature>
<feature type="helix" evidence="19">
    <location>
        <begin position="484"/>
        <end position="491"/>
    </location>
</feature>
<feature type="helix" evidence="19">
    <location>
        <begin position="493"/>
        <end position="495"/>
    </location>
</feature>
<feature type="strand" evidence="19">
    <location>
        <begin position="496"/>
        <end position="502"/>
    </location>
</feature>
<feature type="helix" evidence="19">
    <location>
        <begin position="506"/>
        <end position="508"/>
    </location>
</feature>
<feature type="turn" evidence="19">
    <location>
        <begin position="509"/>
        <end position="512"/>
    </location>
</feature>
<feature type="strand" evidence="19">
    <location>
        <begin position="519"/>
        <end position="527"/>
    </location>
</feature>
<feature type="strand" evidence="19">
    <location>
        <begin position="531"/>
        <end position="539"/>
    </location>
</feature>
<feature type="helix" evidence="19">
    <location>
        <begin position="542"/>
        <end position="554"/>
    </location>
</feature>
<feature type="helix" evidence="19">
    <location>
        <begin position="559"/>
        <end position="563"/>
    </location>
</feature>
<feature type="helix" evidence="19">
    <location>
        <begin position="573"/>
        <end position="578"/>
    </location>
</feature>
<feature type="turn" evidence="19">
    <location>
        <begin position="583"/>
        <end position="585"/>
    </location>
</feature>
<accession>P91938</accession>
<accession>Q1RKZ0</accession>
<accession>Q53YG2</accession>
<accession>Q961E3</accession>
<accession>Q9W3H2</accession>
<accession>Q9W3H3</accession>
<sequence>MNLCNSRFSVTFVRQCSTILTSPSAGIIQNRGSLTTKVPHWISSSLSCAHHTFQRTMNLTGQRGSRDSTGATGGNAPAGSGAGAPPPFQHPHCDRAAMYAQPVRKMSTKGGSYDYDLIVIGGGSAGLACAKEAVLNGARVACLDFVKPTPTLGTKWGVGGTCVNVGCIPKKLMHQASLLGEAVHEAAAYGWNVDEKIKPDWHKLVQSVQNHIKSVNWVTRVDLRDKKVEYINGLGSFVDSHTLLAKLKSGERTITAQTFVIAVGGRPRYPDIPGAVEYGITSDDLFSLDREPGKTLVVGAGYIGLECAGFLKGLGYEPTVMVRSIVLRGFDQQMAELVAASMEERGIPFLRKTVPLSVEKQDDGKLLVKYKNVETGEEAEDVYDTVLWAIGRKGLVDDLNLPNAGVTVQKDKIPVDSQEATNVANIYAVGDIIYGKPELTPVAVLAGRLLARRLYGGSTQRMDYKDVATTVFTPLEYACVGLSEEDAVKQFGADEIEVFHGYYKPTEFFIPQKSVRYCYLKAVAERHGDQRVYGLHYIGPVAGEVIQGFAAALKSGLTINTLINTVGIHPTTAEEFTRLAITKRSGLDPTPASCCS</sequence>
<comment type="function">
    <text evidence="3 4 6">Thioredoxin system is a major player in glutathione metabolism, due to the demonstrated absence of a glutathione reductase. Functionally interacts with the Sod/Cat reactive oxidation species (ROS) defense system and thereby has a role in preadult development and life span. Lack of a glutathione reductase suggests antioxidant defense in Drosophila, and probably in related insects, differs fundamentally from that in other organisms.</text>
</comment>
<comment type="catalytic activity">
    <reaction evidence="3">
        <text>[thioredoxin]-dithiol + NADP(+) = [thioredoxin]-disulfide + NADPH + H(+)</text>
        <dbReference type="Rhea" id="RHEA:20345"/>
        <dbReference type="Rhea" id="RHEA-COMP:10698"/>
        <dbReference type="Rhea" id="RHEA-COMP:10700"/>
        <dbReference type="ChEBI" id="CHEBI:15378"/>
        <dbReference type="ChEBI" id="CHEBI:29950"/>
        <dbReference type="ChEBI" id="CHEBI:50058"/>
        <dbReference type="ChEBI" id="CHEBI:57783"/>
        <dbReference type="ChEBI" id="CHEBI:58349"/>
        <dbReference type="EC" id="1.8.1.9"/>
    </reaction>
</comment>
<comment type="cofactor">
    <cofactor>
        <name>FAD</name>
        <dbReference type="ChEBI" id="CHEBI:57692"/>
    </cofactor>
    <text>Binds 1 FAD per subunit.</text>
</comment>
<comment type="biophysicochemical properties">
    <kinetics>
        <KM evidence="3 5 6 7 8 9 10">6.5 uM for NADPH (at pH 7.4)</KM>
        <KM evidence="3 5 6 7 8 9 10">1 uM for NADPH (at pH 7.4, 2 mM EDTA, 100 mM KPO(4))</KM>
        <KM evidence="3 5 6 7 8 9 10">1 uM for NADPH (isoform B at pH 7.4, 2 mM EDTA, 100 mM KPO(4))</KM>
        <KM evidence="3 5 6 7 8 9 10">7 uM for dhd (at pH 7.4, 200 uM NADPH, 100 mM KPO(4))</KM>
        <KM evidence="3 5 6 7 8 9 10">141 uM for dhd (at pH 7.0, 0.15 mM NADPH, 1 mM EDTA, 1 mg/ml insulin, 50 mM KPO(4), 25 degrees Celsius)</KM>
        <KM evidence="3 5 6 7 8 9 10">7 uM for dhd (at pH 7.4, 2 mM EDTA, 100 mM KPO(4))</KM>
        <KM evidence="3 5 6 7 8 9 10">19 uM for dhd (isoform B at pH 7.4, 2 mM EDTA, 100 mM KPO(4))</KM>
        <KM evidence="3 5 6 7 8 9 10">5.9 uM for Trx2 (at pH 7.4, 100 uM NADPH, 2 mM EDTA, 100 mM KPO(4))</KM>
        <KM evidence="3 5 6 7 8 9 10">310 uM for 5,5'-dithiobis-2-nitrobenzoic acid (DTNB) (at pH 7.4, 100 uM NADPH, 100 mM KPO(4))</KM>
        <KM evidence="3 5 6 7 8 9 10">0.17 mM for DTNB (at pH 7.0, 0.2 mM NADPH, 10 mM EDTA, 100 mM KPO(4), 25 degrees Celsius)</KM>
        <KM evidence="3 5 6 7 8 9 10">380 uM for DTNB (at pH 7.4, 2 mM EDTA, 100 mM KPO(4))</KM>
        <KM evidence="3 5 6 7 8 9 10">410 uM for DTNB (isoform B at pH 7.4, 2 mM EDTA, 100 mM KPO(4))</KM>
        <KM evidence="3 5 6 7 8 9 10">675 uM for methylseleninate (100 uM NADPH)</KM>
        <Vmax evidence="3 5 6 7 8 9 10">24.3 umol/min/mg enzyme toward NADPH (at pH 7.4)</Vmax>
        <Vmax evidence="3 5 6 7 8 9 10">16.0 umol/min/mg enzyme toward Trx2 (at pH 7.4, 100 uM NADPH, 2 mM EDTA, 100 mM KPO(4), 25 degrees Celsius)</Vmax>
        <text>Measurements were conducted with isoform A unless noted otherwise.</text>
    </kinetics>
    <phDependence>
        <text evidence="3 5 6 7 8 9 10">Optimum pH is 7.6 for isoform A with Trx2 and NADPH as substrates.</text>
    </phDependence>
</comment>
<comment type="subunit">
    <text evidence="8">Homodimer.</text>
</comment>
<comment type="subcellular location">
    <molecule>Isoform B</molecule>
    <subcellularLocation>
        <location>Mitochondrion</location>
    </subcellularLocation>
</comment>
<comment type="subcellular location">
    <molecule>Isoform A</molecule>
    <subcellularLocation>
        <location>Cytoplasm</location>
    </subcellularLocation>
</comment>
<comment type="alternative products">
    <event type="alternative splicing"/>
    <event type="alternative initiation"/>
    <isoform>
        <id>P91938-1</id>
        <name>B</name>
        <name>Mito</name>
        <sequence type="displayed"/>
    </isoform>
    <isoform>
        <id>P91938-2</id>
        <name>A</name>
        <name>Cyto</name>
        <sequence type="described" ref="VSP_005572 VSP_005574"/>
    </isoform>
    <isoform>
        <id>P91938-3</id>
        <name>C</name>
        <sequence type="described" ref="VSP_005571 VSP_005573"/>
    </isoform>
    <isoform>
        <id>P91938-4</id>
        <name>D</name>
        <sequence type="described" ref="VSP_005572"/>
    </isoform>
</comment>
<comment type="tissue specificity">
    <text evidence="4">During embryogenesis, expression is seen in germ cell progenitors, developing midgut, hindgut and proventriculus.</text>
</comment>
<comment type="developmental stage">
    <text evidence="4 6">Expressed both maternally and zygotically during all stages of development, highest expression during adult stages.</text>
</comment>
<comment type="miscellaneous">
    <text>The active site is a redox-active disulfide bond.</text>
</comment>
<comment type="miscellaneous">
    <molecule>Isoform B</molecule>
    <text>Can partially substitute for the cytoplasmic enzyme activity.</text>
</comment>
<comment type="miscellaneous">
    <molecule>Isoform A</molecule>
    <text evidence="14">Unable to compensate for the loss of the mitochondrial enzyme activity.</text>
</comment>
<comment type="miscellaneous">
    <molecule>Isoform D</molecule>
    <text evidence="14">Produced by alternative initiation at Met-106 of isoform B.</text>
</comment>
<comment type="similarity">
    <text evidence="14">Belongs to the class-I pyridine nucleotide-disulfide oxidoreductase family.</text>
</comment>
<comment type="caution">
    <text evidence="15">Was originally thought to be a glutathione reductase.</text>
</comment>
<comment type="sequence caution" evidence="14">
    <conflict type="miscellaneous discrepancy">
        <sequence resource="EMBL-CDS" id="AAK93067"/>
    </conflict>
    <text>Chimeric cDNA. Chimeric cDNA originating from chromosomes X and 3.</text>
</comment>
<dbReference type="EC" id="1.8.1.9"/>
<dbReference type="EMBL" id="U81995">
    <property type="protein sequence ID" value="AAB48441.1"/>
    <property type="molecule type" value="mRNA"/>
</dbReference>
<dbReference type="EMBL" id="AF301145">
    <property type="protein sequence ID" value="AAG25640.1"/>
    <property type="molecule type" value="mRNA"/>
</dbReference>
<dbReference type="EMBL" id="AF301144">
    <property type="protein sequence ID" value="AAG25639.1"/>
    <property type="molecule type" value="mRNA"/>
</dbReference>
<dbReference type="EMBL" id="AE014298">
    <property type="protein sequence ID" value="AAF46354.1"/>
    <property type="molecule type" value="Genomic_DNA"/>
</dbReference>
<dbReference type="EMBL" id="AE014298">
    <property type="protein sequence ID" value="AAF46355.2"/>
    <property type="molecule type" value="Genomic_DNA"/>
</dbReference>
<dbReference type="EMBL" id="AE014298">
    <property type="protein sequence ID" value="AAN09228.1"/>
    <property type="molecule type" value="Genomic_DNA"/>
</dbReference>
<dbReference type="EMBL" id="BT003266">
    <property type="protein sequence ID" value="AAO25023.1"/>
    <property type="molecule type" value="mRNA"/>
</dbReference>
<dbReference type="EMBL" id="BT025070">
    <property type="protein sequence ID" value="ABE73241.1"/>
    <property type="molecule type" value="mRNA"/>
</dbReference>
<dbReference type="EMBL" id="AY051643">
    <property type="protein sequence ID" value="AAK93067.1"/>
    <property type="status" value="ALT_SEQ"/>
    <property type="molecule type" value="mRNA"/>
</dbReference>
<dbReference type="RefSeq" id="NP_511082.2">
    <molecule id="P91938-2"/>
    <property type="nucleotide sequence ID" value="NM_078527.3"/>
</dbReference>
<dbReference type="RefSeq" id="NP_727251.1">
    <molecule id="P91938-1"/>
    <property type="nucleotide sequence ID" value="NM_167149.2"/>
</dbReference>
<dbReference type="RefSeq" id="NP_727252.1">
    <molecule id="P91938-3"/>
    <property type="nucleotide sequence ID" value="NM_167150.2"/>
</dbReference>
<dbReference type="PDB" id="2NVK">
    <property type="method" value="X-ray"/>
    <property type="resolution" value="2.40 A"/>
    <property type="chains" value="X=111-593"/>
</dbReference>
<dbReference type="PDB" id="3DGH">
    <property type="method" value="X-ray"/>
    <property type="resolution" value="1.75 A"/>
    <property type="chains" value="A/B=111-588"/>
</dbReference>
<dbReference type="PDB" id="3DH9">
    <property type="method" value="X-ray"/>
    <property type="resolution" value="2.25 A"/>
    <property type="chains" value="A/B=111-591"/>
</dbReference>
<dbReference type="PDBsum" id="2NVK"/>
<dbReference type="PDBsum" id="3DGH"/>
<dbReference type="PDBsum" id="3DH9"/>
<dbReference type="SMR" id="P91938"/>
<dbReference type="BioGRID" id="58221">
    <property type="interactions" value="44"/>
</dbReference>
<dbReference type="DIP" id="DIP-19145N"/>
<dbReference type="FunCoup" id="P91938">
    <property type="interactions" value="1900"/>
</dbReference>
<dbReference type="IntAct" id="P91938">
    <property type="interactions" value="102"/>
</dbReference>
<dbReference type="STRING" id="7227.FBpp0071116"/>
<dbReference type="GlyGen" id="P91938">
    <property type="glycosylation" value="2 sites"/>
</dbReference>
<dbReference type="PaxDb" id="7227-FBpp0071116"/>
<dbReference type="DNASU" id="31760"/>
<dbReference type="EnsemblMetazoa" id="FBtr0071167">
    <molecule id="P91938-2"/>
    <property type="protein sequence ID" value="FBpp0071115"/>
    <property type="gene ID" value="FBgn0020653"/>
</dbReference>
<dbReference type="EnsemblMetazoa" id="FBtr0071168">
    <molecule id="P91938-1"/>
    <property type="protein sequence ID" value="FBpp0071116"/>
    <property type="gene ID" value="FBgn0020653"/>
</dbReference>
<dbReference type="EnsemblMetazoa" id="FBtr0071169">
    <molecule id="P91938-3"/>
    <property type="protein sequence ID" value="FBpp0071117"/>
    <property type="gene ID" value="FBgn0020653"/>
</dbReference>
<dbReference type="GeneID" id="31760"/>
<dbReference type="KEGG" id="dme:Dmel_CG2151"/>
<dbReference type="AGR" id="FB:FBgn0020653"/>
<dbReference type="CTD" id="31760"/>
<dbReference type="FlyBase" id="FBgn0020653">
    <property type="gene designation" value="Trxr1"/>
</dbReference>
<dbReference type="VEuPathDB" id="VectorBase:FBgn0020653"/>
<dbReference type="eggNOG" id="KOG4716">
    <property type="taxonomic scope" value="Eukaryota"/>
</dbReference>
<dbReference type="GeneTree" id="ENSGT00940000167606"/>
<dbReference type="InParanoid" id="P91938"/>
<dbReference type="OMA" id="GTCINWG"/>
<dbReference type="OrthoDB" id="5956163at2759"/>
<dbReference type="PhylomeDB" id="P91938"/>
<dbReference type="BRENDA" id="1.8.1.9">
    <property type="organism ID" value="1994"/>
</dbReference>
<dbReference type="Reactome" id="R-DME-3299685">
    <property type="pathway name" value="Detoxification of Reactive Oxygen Species"/>
</dbReference>
<dbReference type="BioGRID-ORCS" id="31760">
    <property type="hits" value="1 hit in 3 CRISPR screens"/>
</dbReference>
<dbReference type="ChiTaRS" id="Trxr-1">
    <property type="organism name" value="fly"/>
</dbReference>
<dbReference type="EvolutionaryTrace" id="P91938"/>
<dbReference type="GenomeRNAi" id="31760"/>
<dbReference type="PRO" id="PR:P91938"/>
<dbReference type="Proteomes" id="UP000000803">
    <property type="component" value="Chromosome X"/>
</dbReference>
<dbReference type="Bgee" id="FBgn0020653">
    <property type="expression patterns" value="Expressed in adult Malpighian tubule (Drosophila) and 222 other cell types or tissues"/>
</dbReference>
<dbReference type="ExpressionAtlas" id="P91938">
    <property type="expression patterns" value="baseline and differential"/>
</dbReference>
<dbReference type="GO" id="GO:0005737">
    <property type="term" value="C:cytoplasm"/>
    <property type="evidence" value="ECO:0000314"/>
    <property type="project" value="UniProtKB"/>
</dbReference>
<dbReference type="GO" id="GO:0005829">
    <property type="term" value="C:cytosol"/>
    <property type="evidence" value="ECO:0007005"/>
    <property type="project" value="FlyBase"/>
</dbReference>
<dbReference type="GO" id="GO:0005739">
    <property type="term" value="C:mitochondrion"/>
    <property type="evidence" value="ECO:0000314"/>
    <property type="project" value="UniProtKB"/>
</dbReference>
<dbReference type="GO" id="GO:0016209">
    <property type="term" value="F:antioxidant activity"/>
    <property type="evidence" value="ECO:0000314"/>
    <property type="project" value="UniProtKB"/>
</dbReference>
<dbReference type="GO" id="GO:0050660">
    <property type="term" value="F:flavin adenine dinucleotide binding"/>
    <property type="evidence" value="ECO:0007669"/>
    <property type="project" value="InterPro"/>
</dbReference>
<dbReference type="GO" id="GO:0042803">
    <property type="term" value="F:protein homodimerization activity"/>
    <property type="evidence" value="ECO:0000314"/>
    <property type="project" value="FlyBase"/>
</dbReference>
<dbReference type="GO" id="GO:0004791">
    <property type="term" value="F:thioredoxin-disulfide reductase (NADPH) activity"/>
    <property type="evidence" value="ECO:0000314"/>
    <property type="project" value="UniProtKB"/>
</dbReference>
<dbReference type="GO" id="GO:0045454">
    <property type="term" value="P:cell redox homeostasis"/>
    <property type="evidence" value="ECO:0000315"/>
    <property type="project" value="UniProtKB"/>
</dbReference>
<dbReference type="GO" id="GO:0008340">
    <property type="term" value="P:determination of adult lifespan"/>
    <property type="evidence" value="ECO:0000304"/>
    <property type="project" value="FlyBase"/>
</dbReference>
<dbReference type="FunFam" id="3.50.50.60:FF:000190">
    <property type="entry name" value="Thioredoxin reductase"/>
    <property type="match status" value="1"/>
</dbReference>
<dbReference type="FunFam" id="3.30.390.30:FF:000004">
    <property type="entry name" value="Thioredoxin reductase 1, cytoplasmic"/>
    <property type="match status" value="1"/>
</dbReference>
<dbReference type="Gene3D" id="3.30.390.30">
    <property type="match status" value="1"/>
</dbReference>
<dbReference type="Gene3D" id="3.50.50.60">
    <property type="entry name" value="FAD/NAD(P)-binding domain"/>
    <property type="match status" value="2"/>
</dbReference>
<dbReference type="InterPro" id="IPR036188">
    <property type="entry name" value="FAD/NAD-bd_sf"/>
</dbReference>
<dbReference type="InterPro" id="IPR023753">
    <property type="entry name" value="FAD/NAD-binding_dom"/>
</dbReference>
<dbReference type="InterPro" id="IPR016156">
    <property type="entry name" value="FAD/NAD-linked_Rdtase_dimer_sf"/>
</dbReference>
<dbReference type="InterPro" id="IPR046952">
    <property type="entry name" value="GSHR/TRXR-like"/>
</dbReference>
<dbReference type="InterPro" id="IPR001100">
    <property type="entry name" value="Pyr_nuc-diS_OxRdtase"/>
</dbReference>
<dbReference type="InterPro" id="IPR004099">
    <property type="entry name" value="Pyr_nucl-diS_OxRdtase_dimer"/>
</dbReference>
<dbReference type="InterPro" id="IPR012999">
    <property type="entry name" value="Pyr_OxRdtase_I_AS"/>
</dbReference>
<dbReference type="InterPro" id="IPR006338">
    <property type="entry name" value="Thioredoxin/glutathione_Rdtase"/>
</dbReference>
<dbReference type="NCBIfam" id="TIGR01438">
    <property type="entry name" value="TGR"/>
    <property type="match status" value="1"/>
</dbReference>
<dbReference type="PANTHER" id="PTHR42737">
    <property type="entry name" value="GLUTATHIONE REDUCTASE"/>
    <property type="match status" value="1"/>
</dbReference>
<dbReference type="PANTHER" id="PTHR42737:SF7">
    <property type="entry name" value="THIOREDOXIN-DISULFIDE REDUCTASE"/>
    <property type="match status" value="1"/>
</dbReference>
<dbReference type="Pfam" id="PF07992">
    <property type="entry name" value="Pyr_redox_2"/>
    <property type="match status" value="1"/>
</dbReference>
<dbReference type="Pfam" id="PF02852">
    <property type="entry name" value="Pyr_redox_dim"/>
    <property type="match status" value="1"/>
</dbReference>
<dbReference type="PIRSF" id="PIRSF000350">
    <property type="entry name" value="Mercury_reductase_MerA"/>
    <property type="match status" value="1"/>
</dbReference>
<dbReference type="PRINTS" id="PR00368">
    <property type="entry name" value="FADPNR"/>
</dbReference>
<dbReference type="PRINTS" id="PR00411">
    <property type="entry name" value="PNDRDTASEI"/>
</dbReference>
<dbReference type="SUPFAM" id="SSF51905">
    <property type="entry name" value="FAD/NAD(P)-binding domain"/>
    <property type="match status" value="1"/>
</dbReference>
<dbReference type="SUPFAM" id="SSF55424">
    <property type="entry name" value="FAD/NAD-linked reductases, dimerisation (C-terminal) domain"/>
    <property type="match status" value="1"/>
</dbReference>
<dbReference type="PROSITE" id="PS00076">
    <property type="entry name" value="PYRIDINE_REDOX_1"/>
    <property type="match status" value="1"/>
</dbReference>
<protein>
    <recommendedName>
        <fullName evidence="11">Thioredoxin reductase 1, mitochondrial</fullName>
        <ecNumber>1.8.1.9</ecNumber>
    </recommendedName>
</protein>
<gene>
    <name evidence="16" type="primary">Trxr1</name>
    <name evidence="12" type="synonym">GR</name>
    <name evidence="11" type="synonym">Trxr-1</name>
    <name evidence="16" type="ORF">CG2151</name>
</gene>
<evidence type="ECO:0000255" key="1"/>
<evidence type="ECO:0000256" key="2">
    <source>
        <dbReference type="SAM" id="MobiDB-lite"/>
    </source>
</evidence>
<evidence type="ECO:0000269" key="3">
    <source>
    </source>
</evidence>
<evidence type="ECO:0000269" key="4">
    <source>
    </source>
</evidence>
<evidence type="ECO:0000269" key="5">
    <source>
    </source>
</evidence>
<evidence type="ECO:0000269" key="6">
    <source>
    </source>
</evidence>
<evidence type="ECO:0000269" key="7">
    <source>
    </source>
</evidence>
<evidence type="ECO:0000269" key="8">
    <source>
    </source>
</evidence>
<evidence type="ECO:0000269" key="9">
    <source>
    </source>
</evidence>
<evidence type="ECO:0000269" key="10">
    <source>
    </source>
</evidence>
<evidence type="ECO:0000303" key="11">
    <source>
    </source>
</evidence>
<evidence type="ECO:0000303" key="12">
    <source>
    </source>
</evidence>
<evidence type="ECO:0000303" key="13">
    <source ref="5"/>
</evidence>
<evidence type="ECO:0000305" key="14"/>
<evidence type="ECO:0000305" key="15">
    <source>
    </source>
</evidence>
<evidence type="ECO:0000312" key="16">
    <source>
        <dbReference type="FlyBase" id="FBgn0020653"/>
    </source>
</evidence>
<evidence type="ECO:0000312" key="17">
    <source>
        <dbReference type="Proteomes" id="UP000000803"/>
    </source>
</evidence>
<evidence type="ECO:0007829" key="18">
    <source>
        <dbReference type="PDB" id="2NVK"/>
    </source>
</evidence>
<evidence type="ECO:0007829" key="19">
    <source>
        <dbReference type="PDB" id="3DGH"/>
    </source>
</evidence>
<evidence type="ECO:0007829" key="20">
    <source>
        <dbReference type="PDB" id="3DH9"/>
    </source>
</evidence>
<name>TRXR1_DROME</name>
<keyword id="KW-0002">3D-structure</keyword>
<keyword id="KW-0024">Alternative initiation</keyword>
<keyword id="KW-0025">Alternative splicing</keyword>
<keyword id="KW-0963">Cytoplasm</keyword>
<keyword id="KW-1015">Disulfide bond</keyword>
<keyword id="KW-0274">FAD</keyword>
<keyword id="KW-0285">Flavoprotein</keyword>
<keyword id="KW-0496">Mitochondrion</keyword>
<keyword id="KW-0521">NADP</keyword>
<keyword id="KW-0547">Nucleotide-binding</keyword>
<keyword id="KW-0560">Oxidoreductase</keyword>
<keyword id="KW-0676">Redox-active center</keyword>
<keyword id="KW-1185">Reference proteome</keyword>
<keyword id="KW-0809">Transit peptide</keyword>
<organism evidence="17">
    <name type="scientific">Drosophila melanogaster</name>
    <name type="common">Fruit fly</name>
    <dbReference type="NCBI Taxonomy" id="7227"/>
    <lineage>
        <taxon>Eukaryota</taxon>
        <taxon>Metazoa</taxon>
        <taxon>Ecdysozoa</taxon>
        <taxon>Arthropoda</taxon>
        <taxon>Hexapoda</taxon>
        <taxon>Insecta</taxon>
        <taxon>Pterygota</taxon>
        <taxon>Neoptera</taxon>
        <taxon>Endopterygota</taxon>
        <taxon>Diptera</taxon>
        <taxon>Brachycera</taxon>
        <taxon>Muscomorpha</taxon>
        <taxon>Ephydroidea</taxon>
        <taxon>Drosophilidae</taxon>
        <taxon>Drosophila</taxon>
        <taxon>Sophophora</taxon>
    </lineage>
</organism>
<reference key="1">
    <citation type="journal article" date="1997" name="Arch. Biochem. Biophys.">
        <title>Molecular organization of the glutathione reductase gene in Drosophila melanogaster.</title>
        <authorList>
            <person name="Candas M."/>
            <person name="Sohal R.S."/>
            <person name="Radyuk S.N."/>
            <person name="Klichko V.I."/>
            <person name="Orr W.C."/>
        </authorList>
    </citation>
    <scope>NUCLEOTIDE SEQUENCE [MRNA] (ISOFORM A)</scope>
</reference>
<reference key="2">
    <citation type="journal article" date="2001" name="Science">
        <title>Substitution of the thioredoxin system for glutathione reductase in Drosophila melanogaster.</title>
        <authorList>
            <person name="Kanzok S.M."/>
            <person name="Fechner A."/>
            <person name="Bauer H."/>
            <person name="Ulschmid J.K."/>
            <person name="Muller H.M."/>
            <person name="Botella-Munoz J."/>
            <person name="Schneuwly S."/>
            <person name="Schirmer R."/>
            <person name="Becker K."/>
        </authorList>
    </citation>
    <scope>NUCLEOTIDE SEQUENCE [MRNA] (ISOFORMS A AND D)</scope>
    <scope>FUNCTION</scope>
    <scope>CATALYTIC ACTIVITY</scope>
    <scope>BIOPHYSICOCHEMICAL PROPERTIES</scope>
    <scope>MUTAGENESIS OF CYS-594 AND CYS-595</scope>
</reference>
<reference key="3">
    <citation type="journal article" date="2000" name="Science">
        <title>The genome sequence of Drosophila melanogaster.</title>
        <authorList>
            <person name="Adams M.D."/>
            <person name="Celniker S.E."/>
            <person name="Holt R.A."/>
            <person name="Evans C.A."/>
            <person name="Gocayne J.D."/>
            <person name="Amanatides P.G."/>
            <person name="Scherer S.E."/>
            <person name="Li P.W."/>
            <person name="Hoskins R.A."/>
            <person name="Galle R.F."/>
            <person name="George R.A."/>
            <person name="Lewis S.E."/>
            <person name="Richards S."/>
            <person name="Ashburner M."/>
            <person name="Henderson S.N."/>
            <person name="Sutton G.G."/>
            <person name="Wortman J.R."/>
            <person name="Yandell M.D."/>
            <person name="Zhang Q."/>
            <person name="Chen L.X."/>
            <person name="Brandon R.C."/>
            <person name="Rogers Y.-H.C."/>
            <person name="Blazej R.G."/>
            <person name="Champe M."/>
            <person name="Pfeiffer B.D."/>
            <person name="Wan K.H."/>
            <person name="Doyle C."/>
            <person name="Baxter E.G."/>
            <person name="Helt G."/>
            <person name="Nelson C.R."/>
            <person name="Miklos G.L.G."/>
            <person name="Abril J.F."/>
            <person name="Agbayani A."/>
            <person name="An H.-J."/>
            <person name="Andrews-Pfannkoch C."/>
            <person name="Baldwin D."/>
            <person name="Ballew R.M."/>
            <person name="Basu A."/>
            <person name="Baxendale J."/>
            <person name="Bayraktaroglu L."/>
            <person name="Beasley E.M."/>
            <person name="Beeson K.Y."/>
            <person name="Benos P.V."/>
            <person name="Berman B.P."/>
            <person name="Bhandari D."/>
            <person name="Bolshakov S."/>
            <person name="Borkova D."/>
            <person name="Botchan M.R."/>
            <person name="Bouck J."/>
            <person name="Brokstein P."/>
            <person name="Brottier P."/>
            <person name="Burtis K.C."/>
            <person name="Busam D.A."/>
            <person name="Butler H."/>
            <person name="Cadieu E."/>
            <person name="Center A."/>
            <person name="Chandra I."/>
            <person name="Cherry J.M."/>
            <person name="Cawley S."/>
            <person name="Dahlke C."/>
            <person name="Davenport L.B."/>
            <person name="Davies P."/>
            <person name="de Pablos B."/>
            <person name="Delcher A."/>
            <person name="Deng Z."/>
            <person name="Mays A.D."/>
            <person name="Dew I."/>
            <person name="Dietz S.M."/>
            <person name="Dodson K."/>
            <person name="Doup L.E."/>
            <person name="Downes M."/>
            <person name="Dugan-Rocha S."/>
            <person name="Dunkov B.C."/>
            <person name="Dunn P."/>
            <person name="Durbin K.J."/>
            <person name="Evangelista C.C."/>
            <person name="Ferraz C."/>
            <person name="Ferriera S."/>
            <person name="Fleischmann W."/>
            <person name="Fosler C."/>
            <person name="Gabrielian A.E."/>
            <person name="Garg N.S."/>
            <person name="Gelbart W.M."/>
            <person name="Glasser K."/>
            <person name="Glodek A."/>
            <person name="Gong F."/>
            <person name="Gorrell J.H."/>
            <person name="Gu Z."/>
            <person name="Guan P."/>
            <person name="Harris M."/>
            <person name="Harris N.L."/>
            <person name="Harvey D.A."/>
            <person name="Heiman T.J."/>
            <person name="Hernandez J.R."/>
            <person name="Houck J."/>
            <person name="Hostin D."/>
            <person name="Houston K.A."/>
            <person name="Howland T.J."/>
            <person name="Wei M.-H."/>
            <person name="Ibegwam C."/>
            <person name="Jalali M."/>
            <person name="Kalush F."/>
            <person name="Karpen G.H."/>
            <person name="Ke Z."/>
            <person name="Kennison J.A."/>
            <person name="Ketchum K.A."/>
            <person name="Kimmel B.E."/>
            <person name="Kodira C.D."/>
            <person name="Kraft C.L."/>
            <person name="Kravitz S."/>
            <person name="Kulp D."/>
            <person name="Lai Z."/>
            <person name="Lasko P."/>
            <person name="Lei Y."/>
            <person name="Levitsky A.A."/>
            <person name="Li J.H."/>
            <person name="Li Z."/>
            <person name="Liang Y."/>
            <person name="Lin X."/>
            <person name="Liu X."/>
            <person name="Mattei B."/>
            <person name="McIntosh T.C."/>
            <person name="McLeod M.P."/>
            <person name="McPherson D."/>
            <person name="Merkulov G."/>
            <person name="Milshina N.V."/>
            <person name="Mobarry C."/>
            <person name="Morris J."/>
            <person name="Moshrefi A."/>
            <person name="Mount S.M."/>
            <person name="Moy M."/>
            <person name="Murphy B."/>
            <person name="Murphy L."/>
            <person name="Muzny D.M."/>
            <person name="Nelson D.L."/>
            <person name="Nelson D.R."/>
            <person name="Nelson K.A."/>
            <person name="Nixon K."/>
            <person name="Nusskern D.R."/>
            <person name="Pacleb J.M."/>
            <person name="Palazzolo M."/>
            <person name="Pittman G.S."/>
            <person name="Pan S."/>
            <person name="Pollard J."/>
            <person name="Puri V."/>
            <person name="Reese M.G."/>
            <person name="Reinert K."/>
            <person name="Remington K."/>
            <person name="Saunders R.D.C."/>
            <person name="Scheeler F."/>
            <person name="Shen H."/>
            <person name="Shue B.C."/>
            <person name="Siden-Kiamos I."/>
            <person name="Simpson M."/>
            <person name="Skupski M.P."/>
            <person name="Smith T.J."/>
            <person name="Spier E."/>
            <person name="Spradling A.C."/>
            <person name="Stapleton M."/>
            <person name="Strong R."/>
            <person name="Sun E."/>
            <person name="Svirskas R."/>
            <person name="Tector C."/>
            <person name="Turner R."/>
            <person name="Venter E."/>
            <person name="Wang A.H."/>
            <person name="Wang X."/>
            <person name="Wang Z.-Y."/>
            <person name="Wassarman D.A."/>
            <person name="Weinstock G.M."/>
            <person name="Weissenbach J."/>
            <person name="Williams S.M."/>
            <person name="Woodage T."/>
            <person name="Worley K.C."/>
            <person name="Wu D."/>
            <person name="Yang S."/>
            <person name="Yao Q.A."/>
            <person name="Ye J."/>
            <person name="Yeh R.-F."/>
            <person name="Zaveri J.S."/>
            <person name="Zhan M."/>
            <person name="Zhang G."/>
            <person name="Zhao Q."/>
            <person name="Zheng L."/>
            <person name="Zheng X.H."/>
            <person name="Zhong F.N."/>
            <person name="Zhong W."/>
            <person name="Zhou X."/>
            <person name="Zhu S.C."/>
            <person name="Zhu X."/>
            <person name="Smith H.O."/>
            <person name="Gibbs R.A."/>
            <person name="Myers E.W."/>
            <person name="Rubin G.M."/>
            <person name="Venter J.C."/>
        </authorList>
    </citation>
    <scope>NUCLEOTIDE SEQUENCE [LARGE SCALE GENOMIC DNA]</scope>
    <source>
        <strain>Berkeley</strain>
    </source>
</reference>
<reference key="4">
    <citation type="journal article" date="2002" name="Genome Biol.">
        <title>Annotation of the Drosophila melanogaster euchromatic genome: a systematic review.</title>
        <authorList>
            <person name="Misra S."/>
            <person name="Crosby M.A."/>
            <person name="Mungall C.J."/>
            <person name="Matthews B.B."/>
            <person name="Campbell K.S."/>
            <person name="Hradecky P."/>
            <person name="Huang Y."/>
            <person name="Kaminker J.S."/>
            <person name="Millburn G.H."/>
            <person name="Prochnik S.E."/>
            <person name="Smith C.D."/>
            <person name="Tupy J.L."/>
            <person name="Whitfield E.J."/>
            <person name="Bayraktaroglu L."/>
            <person name="Berman B.P."/>
            <person name="Bettencourt B.R."/>
            <person name="Celniker S.E."/>
            <person name="de Grey A.D.N.J."/>
            <person name="Drysdale R.A."/>
            <person name="Harris N.L."/>
            <person name="Richter J."/>
            <person name="Russo S."/>
            <person name="Schroeder A.J."/>
            <person name="Shu S.Q."/>
            <person name="Stapleton M."/>
            <person name="Yamada C."/>
            <person name="Ashburner M."/>
            <person name="Gelbart W.M."/>
            <person name="Rubin G.M."/>
            <person name="Lewis S.E."/>
        </authorList>
    </citation>
    <scope>GENOME REANNOTATION</scope>
    <scope>ALTERNATIVE SPLICING</scope>
    <source>
        <strain>Berkeley</strain>
    </source>
</reference>
<reference key="5">
    <citation type="submission" date="2006-04" db="EMBL/GenBank/DDBJ databases">
        <authorList>
            <person name="Stapleton M."/>
            <person name="Brokstein P."/>
            <person name="Hong L."/>
            <person name="Agbayani A."/>
            <person name="Carlson J.W."/>
            <person name="Champe M."/>
            <person name="Chavez C."/>
            <person name="Dorsett V."/>
            <person name="Dresnek D."/>
            <person name="Farfan D."/>
            <person name="Frise E."/>
            <person name="George R.A."/>
            <person name="Gonzalez M."/>
            <person name="Guarin H."/>
            <person name="Kronmiller B."/>
            <person name="Li P.W."/>
            <person name="Liao G."/>
            <person name="Miranda A."/>
            <person name="Mungall C.J."/>
            <person name="Nunoo J."/>
            <person name="Pacleb J.M."/>
            <person name="Paragas V."/>
            <person name="Park S."/>
            <person name="Patel S."/>
            <person name="Phouanenavong S."/>
            <person name="Wan K.H."/>
            <person name="Yu C."/>
            <person name="Lewis S.E."/>
            <person name="Rubin G.M."/>
            <person name="Celniker S.E."/>
        </authorList>
    </citation>
    <scope>NUCLEOTIDE SEQUENCE [LARGE SCALE MRNA] (ISOFORMS A AND C)</scope>
    <source>
        <strain>Berkeley</strain>
    </source>
</reference>
<reference key="6">
    <citation type="journal article" date="2002" name="Genome Biol.">
        <title>A Drosophila full-length cDNA resource.</title>
        <authorList>
            <person name="Stapleton M."/>
            <person name="Carlson J.W."/>
            <person name="Brokstein P."/>
            <person name="Yu C."/>
            <person name="Champe M."/>
            <person name="George R.A."/>
            <person name="Guarin H."/>
            <person name="Kronmiller B."/>
            <person name="Pacleb J.M."/>
            <person name="Park S."/>
            <person name="Wan K.H."/>
            <person name="Rubin G.M."/>
            <person name="Celniker S.E."/>
        </authorList>
    </citation>
    <scope>NUCLEOTIDE SEQUENCE [LARGE SCALE MRNA] OF 1-447 (ISOFORM B)</scope>
    <source>
        <strain>Berkeley</strain>
        <tissue>Ovary</tissue>
    </source>
</reference>
<reference key="7">
    <citation type="journal article" date="2001" name="Curr. Biol.">
        <title>Cooperative action of antioxidant defense systems in Drosophila.</title>
        <authorList>
            <person name="Missirlis F."/>
            <person name="Phillips J.P."/>
            <person name="Jackle H."/>
        </authorList>
    </citation>
    <scope>FUNCTION</scope>
    <scope>TISSUE SPECIFICITY</scope>
    <scope>DEVELOPMENTAL STAGE</scope>
</reference>
<reference key="8">
    <citation type="journal article" date="2002" name="J. Biol. Chem.">
        <title>Methylseleninate is a substrate rather than an inhibitor of mammalian thioredoxin reductase. Implications for the antitumor effects of selenium.</title>
        <authorList>
            <person name="Gromer S."/>
            <person name="Gross J.H."/>
        </authorList>
    </citation>
    <scope>BIOPHYSICOCHEMICAL PROPERTIES</scope>
</reference>
<reference key="9">
    <citation type="journal article" date="2002" name="J. Biol. Chem.">
        <title>Mitochondrial and cytoplasmic thioredoxin reductase variants encoded by a single Drosophila gene are both essential for viability.</title>
        <authorList>
            <person name="Missirlis F."/>
            <person name="Ulschmid J.K."/>
            <person name="Hirosawa-Takamori M."/>
            <person name="Groenke S."/>
            <person name="Schaefer U."/>
            <person name="Becker K."/>
            <person name="Phillips J.P."/>
            <person name="Jaeckle H."/>
        </authorList>
    </citation>
    <scope>FUNCTION</scope>
    <scope>BIOPHYSICOCHEMICAL PROPERTIES</scope>
    <scope>SUBCELLULAR LOCATION</scope>
    <scope>DEVELOPMENTAL STAGE</scope>
</reference>
<reference key="10">
    <citation type="journal article" date="2002" name="J. Biol. Chem.">
        <title>Thioredoxin-2 but not thioredoxin-1 is a substrate of thioredoxin peroxidase-1 from Drosophila melanogaster: isolation and characterization of a second thioredoxin in D.melanogaster and evidence for distinct biological functions of Trx-1 and Trx-2.</title>
        <authorList>
            <person name="Bauer H."/>
            <person name="Kanzok S.M."/>
            <person name="Schirmer R.H."/>
        </authorList>
    </citation>
    <scope>BIOPHYSICOCHEMICAL PROPERTIES</scope>
</reference>
<reference key="11">
    <citation type="journal article" date="2008" name="Biochemistry">
        <title>Acid-base catalysis in the mechanism of thioredoxin reductase from Drosophila melanogaster.</title>
        <authorList>
            <person name="Huang H.H."/>
            <person name="Arscott L.D."/>
            <person name="Ballou D.P."/>
            <person name="Williams C.H. Jr."/>
        </authorList>
    </citation>
    <scope>BIOPHYSICOCHEMICAL PROPERTIES</scope>
    <scope>MUTAGENESIS OF HIS-569</scope>
</reference>
<reference key="12">
    <citation type="journal article" date="2008" name="Biochemistry">
        <title>Function of Glu-469' in the acid-base catalysis of thioredoxin reductase from Drosophila melanogaster.</title>
        <authorList>
            <person name="Huang H.H."/>
            <person name="Arscott L.D."/>
            <person name="Ballou D.P."/>
            <person name="Williams C.H."/>
        </authorList>
    </citation>
    <scope>BIOPHYSICOCHEMICAL PROPERTIES</scope>
    <scope>MUTAGENESIS OF GLU-574</scope>
</reference>
<reference key="13">
    <citation type="journal article" date="2007" name="Biochemistry">
        <title>Structural and biochemical studies reveal differences in the catalytic mechanisms of mammalian and Drosophila melanogaster thioredoxin reductases.</title>
        <authorList>
            <person name="Eckenroth B.E."/>
            <person name="Rould M.A."/>
            <person name="Hondal R.J."/>
            <person name="Everse S.J."/>
        </authorList>
    </citation>
    <scope>X-RAY CRYSTALLOGRAPHY (2.4 ANGSTROMS) OF 111-593 IN COMPLEX WITH FAD AND NADP</scope>
    <scope>BIOPHYSICOCHEMICAL PROPERTIES</scope>
    <scope>SUBUNIT</scope>
    <scope>ACTIVE SITE</scope>
    <scope>DISULFIDE BOND</scope>
</reference>
<proteinExistence type="evidence at protein level"/>